<protein>
    <recommendedName>
        <fullName>C-reactive protein</fullName>
    </recommendedName>
    <component>
        <recommendedName>
            <fullName>C-reactive protein(1-205)</fullName>
        </recommendedName>
    </component>
</protein>
<accession>P02741</accession>
<accession>A8K078</accession>
<accession>D3DVD9</accession>
<accession>D3DVE0</accession>
<accession>Q08AK3</accession>
<accession>Q8WW75</accession>
<proteinExistence type="evidence at protein level"/>
<sequence length="224" mass="25039">MEKLLCFLVLTSLSHAFGQTDMSRKAFVFPKESDTSYVSLKAPLTKPLKAFTVCLHFYTELSSTRGYSIFSYATKRQDNEILIFWSKDIGYSFTVGGSEILFEVPEVTVAPVHICTSWESASGIVEFWVDGKPRVRKSLKKGYTVGAEASIILGQEQDSFGGNFEGSQSLVGDIGNVNMWDFVLSPDEINTIYLGGPFSPNVLNWRALKYEVQGEVFTKPQLWP</sequence>
<evidence type="ECO:0000255" key="1">
    <source>
        <dbReference type="PROSITE-ProRule" id="PRU01172"/>
    </source>
</evidence>
<evidence type="ECO:0000269" key="2">
    <source>
    </source>
</evidence>
<evidence type="ECO:0000269" key="3">
    <source>
    </source>
</evidence>
<evidence type="ECO:0000269" key="4">
    <source ref="15"/>
</evidence>
<evidence type="ECO:0000303" key="5">
    <source>
    </source>
</evidence>
<evidence type="ECO:0000305" key="6"/>
<evidence type="ECO:0007829" key="7">
    <source>
        <dbReference type="PDB" id="1B09"/>
    </source>
</evidence>
<evidence type="ECO:0007829" key="8">
    <source>
        <dbReference type="PDB" id="1LJ7"/>
    </source>
</evidence>
<evidence type="ECO:0007829" key="9">
    <source>
        <dbReference type="PDB" id="3PVN"/>
    </source>
</evidence>
<evidence type="ECO:0007829" key="10">
    <source>
        <dbReference type="PDB" id="7PKG"/>
    </source>
</evidence>
<evidence type="ECO:0007829" key="11">
    <source>
        <dbReference type="PDB" id="7PKH"/>
    </source>
</evidence>
<keyword id="KW-0002">3D-structure</keyword>
<keyword id="KW-0011">Acute phase</keyword>
<keyword id="KW-0025">Alternative splicing</keyword>
<keyword id="KW-0106">Calcium</keyword>
<keyword id="KW-0903">Direct protein sequencing</keyword>
<keyword id="KW-1015">Disulfide bond</keyword>
<keyword id="KW-0479">Metal-binding</keyword>
<keyword id="KW-1267">Proteomics identification</keyword>
<keyword id="KW-0873">Pyrrolidone carboxylic acid</keyword>
<keyword id="KW-1185">Reference proteome</keyword>
<keyword id="KW-0964">Secreted</keyword>
<keyword id="KW-0732">Signal</keyword>
<dbReference type="EMBL" id="M11880">
    <property type="protein sequence ID" value="AAB59526.1"/>
    <property type="molecule type" value="Genomic_DNA"/>
</dbReference>
<dbReference type="EMBL" id="M11725">
    <property type="protein sequence ID" value="AAA52075.1"/>
    <property type="molecule type" value="Genomic_DNA"/>
</dbReference>
<dbReference type="EMBL" id="X56692">
    <property type="protein sequence ID" value="CAA40020.1"/>
    <property type="molecule type" value="mRNA"/>
</dbReference>
<dbReference type="EMBL" id="X56214">
    <property type="protein sequence ID" value="CAA39671.1"/>
    <property type="molecule type" value="mRNA"/>
</dbReference>
<dbReference type="EMBL" id="AF442818">
    <property type="protein sequence ID" value="AAL48218.2"/>
    <property type="molecule type" value="Genomic_DNA"/>
</dbReference>
<dbReference type="EMBL" id="AK289443">
    <property type="protein sequence ID" value="BAF82132.1"/>
    <property type="molecule type" value="mRNA"/>
</dbReference>
<dbReference type="EMBL" id="AF449713">
    <property type="protein sequence ID" value="AAL40835.1"/>
    <property type="molecule type" value="Genomic_DNA"/>
</dbReference>
<dbReference type="EMBL" id="AL445528">
    <property type="status" value="NOT_ANNOTATED_CDS"/>
    <property type="molecule type" value="Genomic_DNA"/>
</dbReference>
<dbReference type="EMBL" id="CH471121">
    <property type="protein sequence ID" value="EAW52778.1"/>
    <property type="molecule type" value="Genomic_DNA"/>
</dbReference>
<dbReference type="EMBL" id="CH471121">
    <property type="protein sequence ID" value="EAW52779.1"/>
    <property type="molecule type" value="Genomic_DNA"/>
</dbReference>
<dbReference type="EMBL" id="CH471121">
    <property type="protein sequence ID" value="EAW52780.1"/>
    <property type="molecule type" value="Genomic_DNA"/>
</dbReference>
<dbReference type="EMBL" id="BC020766">
    <property type="protein sequence ID" value="AAH20766.1"/>
    <property type="molecule type" value="mRNA"/>
</dbReference>
<dbReference type="EMBL" id="BC125135">
    <property type="protein sequence ID" value="AAI25136.1"/>
    <property type="molecule type" value="mRNA"/>
</dbReference>
<dbReference type="EMBL" id="M35163">
    <property type="protein sequence ID" value="AAA52076.1"/>
    <property type="molecule type" value="mRNA"/>
</dbReference>
<dbReference type="EMBL" id="K00518">
    <property type="protein sequence ID" value="AAA52074.1"/>
    <property type="molecule type" value="mRNA"/>
</dbReference>
<dbReference type="CCDS" id="CCDS30911.1">
    <molecule id="P02741-1"/>
</dbReference>
<dbReference type="CCDS" id="CCDS86024.1">
    <molecule id="P02741-2"/>
</dbReference>
<dbReference type="PIR" id="A24515">
    <property type="entry name" value="CJHU"/>
</dbReference>
<dbReference type="RefSeq" id="NP_000558.2">
    <molecule id="P02741-1"/>
    <property type="nucleotide sequence ID" value="NM_000567.3"/>
</dbReference>
<dbReference type="RefSeq" id="NP_001315986.1">
    <molecule id="P02741-1"/>
    <property type="nucleotide sequence ID" value="NM_001329057.2"/>
</dbReference>
<dbReference type="RefSeq" id="NP_001315987.1">
    <molecule id="P02741-2"/>
    <property type="nucleotide sequence ID" value="NM_001329058.2"/>
</dbReference>
<dbReference type="PDB" id="1B09">
    <property type="method" value="X-ray"/>
    <property type="resolution" value="2.50 A"/>
    <property type="chains" value="A/B/C/D/E=19-224"/>
</dbReference>
<dbReference type="PDB" id="1GNH">
    <property type="method" value="X-ray"/>
    <property type="resolution" value="3.00 A"/>
    <property type="chains" value="A/B/C/D/E/F/G/H/I/J=19-224"/>
</dbReference>
<dbReference type="PDB" id="1LJ7">
    <property type="method" value="X-ray"/>
    <property type="resolution" value="3.15 A"/>
    <property type="chains" value="A/B/C/D/E/F/G/H/I/J=19-224"/>
</dbReference>
<dbReference type="PDB" id="3L2Y">
    <property type="method" value="X-ray"/>
    <property type="resolution" value="2.70 A"/>
    <property type="chains" value="A/B/C/D/E/F/G/H/I/J/K/L/M/N/O/P/Q/R/S/T=19-224"/>
</dbReference>
<dbReference type="PDB" id="3PVN">
    <property type="method" value="X-ray"/>
    <property type="resolution" value="1.98 A"/>
    <property type="chains" value="A/B/C/D/E/F/G/H/I/J/K/L/M/N/O/P/Q/R/S/T=19-224"/>
</dbReference>
<dbReference type="PDB" id="3PVO">
    <property type="method" value="X-ray"/>
    <property type="resolution" value="3.00 A"/>
    <property type="chains" value="A/B/C/D/E/F/G/H/I/J/K/L/M/N/O/P/Q/R/S/T=19-224"/>
</dbReference>
<dbReference type="PDB" id="7PK9">
    <property type="method" value="EM"/>
    <property type="resolution" value="2.80 A"/>
    <property type="chains" value="A/B/C/D/E/F/G/H/I/J=19-224"/>
</dbReference>
<dbReference type="PDB" id="7PKB">
    <property type="method" value="EM"/>
    <property type="resolution" value="3.20 A"/>
    <property type="chains" value="A/B/C/D/E=19-224"/>
</dbReference>
<dbReference type="PDB" id="7PKD">
    <property type="method" value="EM"/>
    <property type="resolution" value="3.30 A"/>
    <property type="chains" value="A/B/C/D/E/F/G/H/I/J=19-224"/>
</dbReference>
<dbReference type="PDB" id="7PKE">
    <property type="method" value="EM"/>
    <property type="resolution" value="3.30 A"/>
    <property type="chains" value="A/B/C/D/E=19-224"/>
</dbReference>
<dbReference type="PDB" id="7PKF">
    <property type="method" value="EM"/>
    <property type="resolution" value="2.80 A"/>
    <property type="chains" value="A/B/C/D/E/F/G/H/I/J=19-224"/>
</dbReference>
<dbReference type="PDB" id="7PKG">
    <property type="method" value="EM"/>
    <property type="resolution" value="3.30 A"/>
    <property type="chains" value="A/B/C/D/E=19-224"/>
</dbReference>
<dbReference type="PDB" id="7PKH">
    <property type="method" value="EM"/>
    <property type="resolution" value="3.00 A"/>
    <property type="chains" value="A/B/C/D/E/F/G/H/I/J=19-224"/>
</dbReference>
<dbReference type="PDB" id="7TBA">
    <property type="method" value="X-ray"/>
    <property type="resolution" value="3.50 A"/>
    <property type="chains" value="A/B/C/D/E/F/G/H/I/J/K/L/M/N/O/P/Q/R/S/T=19-224"/>
</dbReference>
<dbReference type="PDB" id="8WV4">
    <property type="method" value="EM"/>
    <property type="resolution" value="3.30 A"/>
    <property type="chains" value="A/B/C/D/E=1-224"/>
</dbReference>
<dbReference type="PDB" id="8WV5">
    <property type="method" value="EM"/>
    <property type="resolution" value="3.50 A"/>
    <property type="chains" value="A/B/C/D/E/F/G/H/I/J=1-224"/>
</dbReference>
<dbReference type="PDBsum" id="1B09"/>
<dbReference type="PDBsum" id="1GNH"/>
<dbReference type="PDBsum" id="1LJ7"/>
<dbReference type="PDBsum" id="3L2Y"/>
<dbReference type="PDBsum" id="3PVN"/>
<dbReference type="PDBsum" id="3PVO"/>
<dbReference type="PDBsum" id="7PK9"/>
<dbReference type="PDBsum" id="7PKB"/>
<dbReference type="PDBsum" id="7PKD"/>
<dbReference type="PDBsum" id="7PKE"/>
<dbReference type="PDBsum" id="7PKF"/>
<dbReference type="PDBsum" id="7PKG"/>
<dbReference type="PDBsum" id="7PKH"/>
<dbReference type="PDBsum" id="7TBA"/>
<dbReference type="PDBsum" id="8WV4"/>
<dbReference type="PDBsum" id="8WV5"/>
<dbReference type="EMDB" id="EMD-13456"/>
<dbReference type="EMDB" id="EMD-13467"/>
<dbReference type="EMDB" id="EMD-13468"/>
<dbReference type="EMDB" id="EMD-13469"/>
<dbReference type="EMDB" id="EMD-13470"/>
<dbReference type="EMDB" id="EMD-13471"/>
<dbReference type="EMDB" id="EMD-13472"/>
<dbReference type="EMDB" id="EMD-37864"/>
<dbReference type="EMDB" id="EMD-37865"/>
<dbReference type="SMR" id="P02741"/>
<dbReference type="BioGRID" id="107791">
    <property type="interactions" value="72"/>
</dbReference>
<dbReference type="DIP" id="DIP-39125N"/>
<dbReference type="FunCoup" id="P02741">
    <property type="interactions" value="214"/>
</dbReference>
<dbReference type="IntAct" id="P02741">
    <property type="interactions" value="79"/>
</dbReference>
<dbReference type="MINT" id="P02741"/>
<dbReference type="STRING" id="9606.ENSP00000255030"/>
<dbReference type="DrugBank" id="DB05744">
    <property type="generic name" value="CRx-139"/>
</dbReference>
<dbReference type="DrugBank" id="DB03945">
    <property type="generic name" value="N,N,N-Trimethyl-2-(phosphonooxy)ethanaminium"/>
</dbReference>
<dbReference type="UniLectin" id="P02741"/>
<dbReference type="GlyGen" id="P02741">
    <property type="glycosylation" value="1 site"/>
</dbReference>
<dbReference type="iPTMnet" id="P02741"/>
<dbReference type="PhosphoSitePlus" id="P02741"/>
<dbReference type="BioMuta" id="CRP"/>
<dbReference type="DMDM" id="117486"/>
<dbReference type="CPTAC" id="CPTAC-1478"/>
<dbReference type="jPOST" id="P02741"/>
<dbReference type="MassIVE" id="P02741"/>
<dbReference type="PaxDb" id="9606-ENSP00000255030"/>
<dbReference type="PeptideAtlas" id="P02741"/>
<dbReference type="ProteomicsDB" id="51558">
    <molecule id="P02741-1"/>
</dbReference>
<dbReference type="ProteomicsDB" id="51559">
    <molecule id="P02741-2"/>
</dbReference>
<dbReference type="ABCD" id="P02741">
    <property type="antibodies" value="8 sequenced antibodies"/>
</dbReference>
<dbReference type="Antibodypedia" id="3561">
    <property type="antibodies" value="2155 antibodies from 52 providers"/>
</dbReference>
<dbReference type="CPTC" id="P02741">
    <property type="antibodies" value="1 antibody"/>
</dbReference>
<dbReference type="DNASU" id="1401"/>
<dbReference type="Ensembl" id="ENST00000255030.9">
    <molecule id="P02741-1"/>
    <property type="protein sequence ID" value="ENSP00000255030.5"/>
    <property type="gene ID" value="ENSG00000132693.12"/>
</dbReference>
<dbReference type="Ensembl" id="ENST00000368112.5">
    <molecule id="P02741-2"/>
    <property type="protein sequence ID" value="ENSP00000357093.1"/>
    <property type="gene ID" value="ENSG00000132693.12"/>
</dbReference>
<dbReference type="GeneID" id="1401"/>
<dbReference type="KEGG" id="hsa:1401"/>
<dbReference type="MANE-Select" id="ENST00000255030.9">
    <property type="protein sequence ID" value="ENSP00000255030.5"/>
    <property type="RefSeq nucleotide sequence ID" value="NM_000567.3"/>
    <property type="RefSeq protein sequence ID" value="NP_000558.2"/>
</dbReference>
<dbReference type="UCSC" id="uc001ftw.3">
    <molecule id="P02741-1"/>
    <property type="organism name" value="human"/>
</dbReference>
<dbReference type="AGR" id="HGNC:2367"/>
<dbReference type="CTD" id="1401"/>
<dbReference type="DisGeNET" id="1401"/>
<dbReference type="GeneCards" id="CRP"/>
<dbReference type="HGNC" id="HGNC:2367">
    <property type="gene designation" value="CRP"/>
</dbReference>
<dbReference type="HPA" id="ENSG00000132693">
    <property type="expression patterns" value="Tissue enriched (liver)"/>
</dbReference>
<dbReference type="MalaCards" id="CRP"/>
<dbReference type="MIM" id="123260">
    <property type="type" value="gene"/>
</dbReference>
<dbReference type="neXtProt" id="NX_P02741"/>
<dbReference type="OpenTargets" id="ENSG00000132693"/>
<dbReference type="PharmGKB" id="PA120"/>
<dbReference type="VEuPathDB" id="HostDB:ENSG00000132693"/>
<dbReference type="eggNOG" id="ENOG502S201">
    <property type="taxonomic scope" value="Eukaryota"/>
</dbReference>
<dbReference type="GeneTree" id="ENSGT01100000263515"/>
<dbReference type="HOGENOM" id="CLU_032051_2_0_1"/>
<dbReference type="InParanoid" id="P02741"/>
<dbReference type="OMA" id="MEKLLWC"/>
<dbReference type="OrthoDB" id="547680at2759"/>
<dbReference type="PAN-GO" id="P02741">
    <property type="GO annotations" value="4 GO annotations based on evolutionary models"/>
</dbReference>
<dbReference type="PhylomeDB" id="P02741"/>
<dbReference type="TreeFam" id="TF330208"/>
<dbReference type="PathwayCommons" id="P02741"/>
<dbReference type="Reactome" id="R-HSA-173623">
    <property type="pathway name" value="Classical antibody-mediated complement activation"/>
</dbReference>
<dbReference type="SignaLink" id="P02741"/>
<dbReference type="SIGNOR" id="P02741"/>
<dbReference type="BioGRID-ORCS" id="1401">
    <property type="hits" value="9 hits in 1150 CRISPR screens"/>
</dbReference>
<dbReference type="ChiTaRS" id="CRP">
    <property type="organism name" value="human"/>
</dbReference>
<dbReference type="EvolutionaryTrace" id="P02741"/>
<dbReference type="GeneWiki" id="C-reactive_protein"/>
<dbReference type="GenomeRNAi" id="1401"/>
<dbReference type="Pharos" id="P02741">
    <property type="development level" value="Tbio"/>
</dbReference>
<dbReference type="PRO" id="PR:P02741"/>
<dbReference type="Proteomes" id="UP000005640">
    <property type="component" value="Chromosome 1"/>
</dbReference>
<dbReference type="RNAct" id="P02741">
    <property type="molecule type" value="protein"/>
</dbReference>
<dbReference type="Bgee" id="ENSG00000132693">
    <property type="expression patterns" value="Expressed in right lobe of liver and 88 other cell types or tissues"/>
</dbReference>
<dbReference type="ExpressionAtlas" id="P02741">
    <property type="expression patterns" value="baseline and differential"/>
</dbReference>
<dbReference type="GO" id="GO:0005576">
    <property type="term" value="C:extracellular region"/>
    <property type="evidence" value="ECO:0000303"/>
    <property type="project" value="UniProtKB"/>
</dbReference>
<dbReference type="GO" id="GO:0005615">
    <property type="term" value="C:extracellular space"/>
    <property type="evidence" value="ECO:0000314"/>
    <property type="project" value="BHF-UCL"/>
</dbReference>
<dbReference type="GO" id="GO:0005509">
    <property type="term" value="F:calcium ion binding"/>
    <property type="evidence" value="ECO:0000314"/>
    <property type="project" value="BHF-UCL"/>
</dbReference>
<dbReference type="GO" id="GO:0033265">
    <property type="term" value="F:choline binding"/>
    <property type="evidence" value="ECO:0000304"/>
    <property type="project" value="BHF-UCL"/>
</dbReference>
<dbReference type="GO" id="GO:0001849">
    <property type="term" value="F:complement component C1q complex binding"/>
    <property type="evidence" value="ECO:0000314"/>
    <property type="project" value="BHF-UCL"/>
</dbReference>
<dbReference type="GO" id="GO:0042802">
    <property type="term" value="F:identical protein binding"/>
    <property type="evidence" value="ECO:0000353"/>
    <property type="project" value="IntAct"/>
</dbReference>
<dbReference type="GO" id="GO:0030169">
    <property type="term" value="F:low-density lipoprotein particle binding"/>
    <property type="evidence" value="ECO:0000314"/>
    <property type="project" value="BHF-UCL"/>
</dbReference>
<dbReference type="GO" id="GO:0050750">
    <property type="term" value="F:low-density lipoprotein particle receptor binding"/>
    <property type="evidence" value="ECO:0000353"/>
    <property type="project" value="AgBase"/>
</dbReference>
<dbReference type="GO" id="GO:0006953">
    <property type="term" value="P:acute-phase response"/>
    <property type="evidence" value="ECO:0000304"/>
    <property type="project" value="BHF-UCL"/>
</dbReference>
<dbReference type="GO" id="GO:0050830">
    <property type="term" value="P:defense response to Gram-positive bacterium"/>
    <property type="evidence" value="ECO:0000304"/>
    <property type="project" value="BHF-UCL"/>
</dbReference>
<dbReference type="GO" id="GO:0006954">
    <property type="term" value="P:inflammatory response"/>
    <property type="evidence" value="ECO:0000304"/>
    <property type="project" value="ProtInc"/>
</dbReference>
<dbReference type="GO" id="GO:0045087">
    <property type="term" value="P:innate immune response"/>
    <property type="evidence" value="ECO:0000318"/>
    <property type="project" value="GO_Central"/>
</dbReference>
<dbReference type="GO" id="GO:0010888">
    <property type="term" value="P:negative regulation of lipid storage"/>
    <property type="evidence" value="ECO:0000314"/>
    <property type="project" value="BHF-UCL"/>
</dbReference>
<dbReference type="GO" id="GO:0010745">
    <property type="term" value="P:negative regulation of macrophage derived foam cell differentiation"/>
    <property type="evidence" value="ECO:0000314"/>
    <property type="project" value="BHF-UCL"/>
</dbReference>
<dbReference type="GO" id="GO:0032945">
    <property type="term" value="P:negative regulation of mononuclear cell proliferation"/>
    <property type="evidence" value="ECO:0000314"/>
    <property type="project" value="CACAO"/>
</dbReference>
<dbReference type="GO" id="GO:0008228">
    <property type="term" value="P:opsonization"/>
    <property type="evidence" value="ECO:0000304"/>
    <property type="project" value="BHF-UCL"/>
</dbReference>
<dbReference type="GO" id="GO:0010628">
    <property type="term" value="P:positive regulation of gene expression"/>
    <property type="evidence" value="ECO:0000314"/>
    <property type="project" value="AgBase"/>
</dbReference>
<dbReference type="GO" id="GO:0032930">
    <property type="term" value="P:positive regulation of superoxide anion generation"/>
    <property type="evidence" value="ECO:0000314"/>
    <property type="project" value="AgBase"/>
</dbReference>
<dbReference type="GO" id="GO:0032677">
    <property type="term" value="P:regulation of interleukin-8 production"/>
    <property type="evidence" value="ECO:0000314"/>
    <property type="project" value="UniProtKB"/>
</dbReference>
<dbReference type="GO" id="GO:0042310">
    <property type="term" value="P:vasoconstriction"/>
    <property type="evidence" value="ECO:0000314"/>
    <property type="project" value="GO_Central"/>
</dbReference>
<dbReference type="CDD" id="cd00152">
    <property type="entry name" value="PTX"/>
    <property type="match status" value="1"/>
</dbReference>
<dbReference type="FunFam" id="2.60.120.200:FF:000070">
    <property type="entry name" value="Serum amyloid P-component"/>
    <property type="match status" value="1"/>
</dbReference>
<dbReference type="Gene3D" id="2.60.120.200">
    <property type="match status" value="1"/>
</dbReference>
<dbReference type="InterPro" id="IPR013320">
    <property type="entry name" value="ConA-like_dom_sf"/>
</dbReference>
<dbReference type="InterPro" id="IPR030476">
    <property type="entry name" value="Pentaxin_CS"/>
</dbReference>
<dbReference type="InterPro" id="IPR001759">
    <property type="entry name" value="Pentraxin-related"/>
</dbReference>
<dbReference type="InterPro" id="IPR051005">
    <property type="entry name" value="Pentraxin_domain"/>
</dbReference>
<dbReference type="PANTHER" id="PTHR45869:SF7">
    <property type="entry name" value="C-REACTIVE PROTEIN"/>
    <property type="match status" value="1"/>
</dbReference>
<dbReference type="PANTHER" id="PTHR45869">
    <property type="entry name" value="C-REACTIVE PROTEIN-RELATED"/>
    <property type="match status" value="1"/>
</dbReference>
<dbReference type="Pfam" id="PF00354">
    <property type="entry name" value="Pentaxin"/>
    <property type="match status" value="1"/>
</dbReference>
<dbReference type="PRINTS" id="PR00895">
    <property type="entry name" value="PENTAXIN"/>
</dbReference>
<dbReference type="SMART" id="SM00159">
    <property type="entry name" value="PTX"/>
    <property type="match status" value="1"/>
</dbReference>
<dbReference type="SUPFAM" id="SSF49899">
    <property type="entry name" value="Concanavalin A-like lectins/glucanases"/>
    <property type="match status" value="1"/>
</dbReference>
<dbReference type="PROSITE" id="PS00289">
    <property type="entry name" value="PTX_1"/>
    <property type="match status" value="1"/>
</dbReference>
<dbReference type="PROSITE" id="PS51828">
    <property type="entry name" value="PTX_2"/>
    <property type="match status" value="1"/>
</dbReference>
<reference key="1">
    <citation type="journal article" date="1985" name="J. Biol. Chem.">
        <title>Genomic DNA sequence for human C-reactive protein.</title>
        <authorList>
            <person name="Lei K.-J."/>
            <person name="Liu T."/>
            <person name="Zon G."/>
            <person name="Soravia E."/>
            <person name="Liu T.-Y."/>
            <person name="Goldman N.D."/>
        </authorList>
    </citation>
    <scope>NUCLEOTIDE SEQUENCE [GENOMIC DNA]</scope>
</reference>
<reference key="2">
    <citation type="journal article" date="1985" name="J. Biol. Chem.">
        <title>Characterization of genomic and complementary DNA sequence of human C-reactive protein, and comparison with the complementary DNA sequence of serum amyloid P component.</title>
        <authorList>
            <person name="Woo P."/>
            <person name="Korenberg J.R."/>
            <person name="Whitehead A.S."/>
        </authorList>
    </citation>
    <scope>NUCLEOTIDE SEQUENCE [MRNA]</scope>
</reference>
<reference key="3">
    <citation type="submission" date="1990-11" db="EMBL/GenBank/DDBJ databases">
        <title>Extrahepetic transcription of human C-reactive protein.</title>
        <authorList>
            <person name="Murphy T.M."/>
            <person name="Baum L."/>
            <person name="Beaman K."/>
        </authorList>
    </citation>
    <scope>NUCLEOTIDE SEQUENCE [MRNA]</scope>
</reference>
<reference key="4">
    <citation type="submission" date="1992-05" db="EMBL/GenBank/DDBJ databases">
        <authorList>
            <person name="Tenchini M.L."/>
            <person name="Marchetti L."/>
            <person name="Bossi E."/>
            <person name="Malcovati M."/>
            <person name="Lorenzetti R."/>
        </authorList>
    </citation>
    <scope>NUCLEOTIDE SEQUENCE [MRNA]</scope>
    <source>
        <tissue>Liver</tissue>
    </source>
</reference>
<reference key="5">
    <citation type="submission" date="2001-12" db="EMBL/GenBank/DDBJ databases">
        <title>Controlled gene expression using acute phase response elements.</title>
        <authorList>
            <person name="Harraghy N."/>
        </authorList>
    </citation>
    <scope>NUCLEOTIDE SEQUENCE [GENOMIC DNA]</scope>
</reference>
<reference key="6">
    <citation type="journal article" date="2004" name="Nat. Genet.">
        <title>Complete sequencing and characterization of 21,243 full-length human cDNAs.</title>
        <authorList>
            <person name="Ota T."/>
            <person name="Suzuki Y."/>
            <person name="Nishikawa T."/>
            <person name="Otsuki T."/>
            <person name="Sugiyama T."/>
            <person name="Irie R."/>
            <person name="Wakamatsu A."/>
            <person name="Hayashi K."/>
            <person name="Sato H."/>
            <person name="Nagai K."/>
            <person name="Kimura K."/>
            <person name="Makita H."/>
            <person name="Sekine M."/>
            <person name="Obayashi M."/>
            <person name="Nishi T."/>
            <person name="Shibahara T."/>
            <person name="Tanaka T."/>
            <person name="Ishii S."/>
            <person name="Yamamoto J."/>
            <person name="Saito K."/>
            <person name="Kawai Y."/>
            <person name="Isono Y."/>
            <person name="Nakamura Y."/>
            <person name="Nagahari K."/>
            <person name="Murakami K."/>
            <person name="Yasuda T."/>
            <person name="Iwayanagi T."/>
            <person name="Wagatsuma M."/>
            <person name="Shiratori A."/>
            <person name="Sudo H."/>
            <person name="Hosoiri T."/>
            <person name="Kaku Y."/>
            <person name="Kodaira H."/>
            <person name="Kondo H."/>
            <person name="Sugawara M."/>
            <person name="Takahashi M."/>
            <person name="Kanda K."/>
            <person name="Yokoi T."/>
            <person name="Furuya T."/>
            <person name="Kikkawa E."/>
            <person name="Omura Y."/>
            <person name="Abe K."/>
            <person name="Kamihara K."/>
            <person name="Katsuta N."/>
            <person name="Sato K."/>
            <person name="Tanikawa M."/>
            <person name="Yamazaki M."/>
            <person name="Ninomiya K."/>
            <person name="Ishibashi T."/>
            <person name="Yamashita H."/>
            <person name="Murakawa K."/>
            <person name="Fujimori K."/>
            <person name="Tanai H."/>
            <person name="Kimata M."/>
            <person name="Watanabe M."/>
            <person name="Hiraoka S."/>
            <person name="Chiba Y."/>
            <person name="Ishida S."/>
            <person name="Ono Y."/>
            <person name="Takiguchi S."/>
            <person name="Watanabe S."/>
            <person name="Yosida M."/>
            <person name="Hotuta T."/>
            <person name="Kusano J."/>
            <person name="Kanehori K."/>
            <person name="Takahashi-Fujii A."/>
            <person name="Hara H."/>
            <person name="Tanase T.-O."/>
            <person name="Nomura Y."/>
            <person name="Togiya S."/>
            <person name="Komai F."/>
            <person name="Hara R."/>
            <person name="Takeuchi K."/>
            <person name="Arita M."/>
            <person name="Imose N."/>
            <person name="Musashino K."/>
            <person name="Yuuki H."/>
            <person name="Oshima A."/>
            <person name="Sasaki N."/>
            <person name="Aotsuka S."/>
            <person name="Yoshikawa Y."/>
            <person name="Matsunawa H."/>
            <person name="Ichihara T."/>
            <person name="Shiohata N."/>
            <person name="Sano S."/>
            <person name="Moriya S."/>
            <person name="Momiyama H."/>
            <person name="Satoh N."/>
            <person name="Takami S."/>
            <person name="Terashima Y."/>
            <person name="Suzuki O."/>
            <person name="Nakagawa S."/>
            <person name="Senoh A."/>
            <person name="Mizoguchi H."/>
            <person name="Goto Y."/>
            <person name="Shimizu F."/>
            <person name="Wakebe H."/>
            <person name="Hishigaki H."/>
            <person name="Watanabe T."/>
            <person name="Sugiyama A."/>
            <person name="Takemoto M."/>
            <person name="Kawakami B."/>
            <person name="Yamazaki M."/>
            <person name="Watanabe K."/>
            <person name="Kumagai A."/>
            <person name="Itakura S."/>
            <person name="Fukuzumi Y."/>
            <person name="Fujimori Y."/>
            <person name="Komiyama M."/>
            <person name="Tashiro H."/>
            <person name="Tanigami A."/>
            <person name="Fujiwara T."/>
            <person name="Ono T."/>
            <person name="Yamada K."/>
            <person name="Fujii Y."/>
            <person name="Ozaki K."/>
            <person name="Hirao M."/>
            <person name="Ohmori Y."/>
            <person name="Kawabata A."/>
            <person name="Hikiji T."/>
            <person name="Kobatake N."/>
            <person name="Inagaki H."/>
            <person name="Ikema Y."/>
            <person name="Okamoto S."/>
            <person name="Okitani R."/>
            <person name="Kawakami T."/>
            <person name="Noguchi S."/>
            <person name="Itoh T."/>
            <person name="Shigeta K."/>
            <person name="Senba T."/>
            <person name="Matsumura K."/>
            <person name="Nakajima Y."/>
            <person name="Mizuno T."/>
            <person name="Morinaga M."/>
            <person name="Sasaki M."/>
            <person name="Togashi T."/>
            <person name="Oyama M."/>
            <person name="Hata H."/>
            <person name="Watanabe M."/>
            <person name="Komatsu T."/>
            <person name="Mizushima-Sugano J."/>
            <person name="Satoh T."/>
            <person name="Shirai Y."/>
            <person name="Takahashi Y."/>
            <person name="Nakagawa K."/>
            <person name="Okumura K."/>
            <person name="Nagase T."/>
            <person name="Nomura N."/>
            <person name="Kikuchi H."/>
            <person name="Masuho Y."/>
            <person name="Yamashita R."/>
            <person name="Nakai K."/>
            <person name="Yada T."/>
            <person name="Nakamura Y."/>
            <person name="Ohara O."/>
            <person name="Isogai T."/>
            <person name="Sugano S."/>
        </authorList>
    </citation>
    <scope>NUCLEOTIDE SEQUENCE [LARGE SCALE MRNA] (ISOFORM 1)</scope>
    <source>
        <tissue>Urinary bladder</tissue>
    </source>
</reference>
<reference key="7">
    <citation type="submission" date="2001-11" db="EMBL/GenBank/DDBJ databases">
        <authorList>
            <consortium name="SeattleSNPs variation discovery resource"/>
        </authorList>
    </citation>
    <scope>NUCLEOTIDE SEQUENCE [GENOMIC DNA]</scope>
</reference>
<reference key="8">
    <citation type="journal article" date="2006" name="Nature">
        <title>The DNA sequence and biological annotation of human chromosome 1.</title>
        <authorList>
            <person name="Gregory S.G."/>
            <person name="Barlow K.F."/>
            <person name="McLay K.E."/>
            <person name="Kaul R."/>
            <person name="Swarbreck D."/>
            <person name="Dunham A."/>
            <person name="Scott C.E."/>
            <person name="Howe K.L."/>
            <person name="Woodfine K."/>
            <person name="Spencer C.C.A."/>
            <person name="Jones M.C."/>
            <person name="Gillson C."/>
            <person name="Searle S."/>
            <person name="Zhou Y."/>
            <person name="Kokocinski F."/>
            <person name="McDonald L."/>
            <person name="Evans R."/>
            <person name="Phillips K."/>
            <person name="Atkinson A."/>
            <person name="Cooper R."/>
            <person name="Jones C."/>
            <person name="Hall R.E."/>
            <person name="Andrews T.D."/>
            <person name="Lloyd C."/>
            <person name="Ainscough R."/>
            <person name="Almeida J.P."/>
            <person name="Ambrose K.D."/>
            <person name="Anderson F."/>
            <person name="Andrew R.W."/>
            <person name="Ashwell R.I.S."/>
            <person name="Aubin K."/>
            <person name="Babbage A.K."/>
            <person name="Bagguley C.L."/>
            <person name="Bailey J."/>
            <person name="Beasley H."/>
            <person name="Bethel G."/>
            <person name="Bird C.P."/>
            <person name="Bray-Allen S."/>
            <person name="Brown J.Y."/>
            <person name="Brown A.J."/>
            <person name="Buckley D."/>
            <person name="Burton J."/>
            <person name="Bye J."/>
            <person name="Carder C."/>
            <person name="Chapman J.C."/>
            <person name="Clark S.Y."/>
            <person name="Clarke G."/>
            <person name="Clee C."/>
            <person name="Cobley V."/>
            <person name="Collier R.E."/>
            <person name="Corby N."/>
            <person name="Coville G.J."/>
            <person name="Davies J."/>
            <person name="Deadman R."/>
            <person name="Dunn M."/>
            <person name="Earthrowl M."/>
            <person name="Ellington A.G."/>
            <person name="Errington H."/>
            <person name="Frankish A."/>
            <person name="Frankland J."/>
            <person name="French L."/>
            <person name="Garner P."/>
            <person name="Garnett J."/>
            <person name="Gay L."/>
            <person name="Ghori M.R.J."/>
            <person name="Gibson R."/>
            <person name="Gilby L.M."/>
            <person name="Gillett W."/>
            <person name="Glithero R.J."/>
            <person name="Grafham D.V."/>
            <person name="Griffiths C."/>
            <person name="Griffiths-Jones S."/>
            <person name="Grocock R."/>
            <person name="Hammond S."/>
            <person name="Harrison E.S.I."/>
            <person name="Hart E."/>
            <person name="Haugen E."/>
            <person name="Heath P.D."/>
            <person name="Holmes S."/>
            <person name="Holt K."/>
            <person name="Howden P.J."/>
            <person name="Hunt A.R."/>
            <person name="Hunt S.E."/>
            <person name="Hunter G."/>
            <person name="Isherwood J."/>
            <person name="James R."/>
            <person name="Johnson C."/>
            <person name="Johnson D."/>
            <person name="Joy A."/>
            <person name="Kay M."/>
            <person name="Kershaw J.K."/>
            <person name="Kibukawa M."/>
            <person name="Kimberley A.M."/>
            <person name="King A."/>
            <person name="Knights A.J."/>
            <person name="Lad H."/>
            <person name="Laird G."/>
            <person name="Lawlor S."/>
            <person name="Leongamornlert D.A."/>
            <person name="Lloyd D.M."/>
            <person name="Loveland J."/>
            <person name="Lovell J."/>
            <person name="Lush M.J."/>
            <person name="Lyne R."/>
            <person name="Martin S."/>
            <person name="Mashreghi-Mohammadi M."/>
            <person name="Matthews L."/>
            <person name="Matthews N.S.W."/>
            <person name="McLaren S."/>
            <person name="Milne S."/>
            <person name="Mistry S."/>
            <person name="Moore M.J.F."/>
            <person name="Nickerson T."/>
            <person name="O'Dell C.N."/>
            <person name="Oliver K."/>
            <person name="Palmeiri A."/>
            <person name="Palmer S.A."/>
            <person name="Parker A."/>
            <person name="Patel D."/>
            <person name="Pearce A.V."/>
            <person name="Peck A.I."/>
            <person name="Pelan S."/>
            <person name="Phelps K."/>
            <person name="Phillimore B.J."/>
            <person name="Plumb R."/>
            <person name="Rajan J."/>
            <person name="Raymond C."/>
            <person name="Rouse G."/>
            <person name="Saenphimmachak C."/>
            <person name="Sehra H.K."/>
            <person name="Sheridan E."/>
            <person name="Shownkeen R."/>
            <person name="Sims S."/>
            <person name="Skuce C.D."/>
            <person name="Smith M."/>
            <person name="Steward C."/>
            <person name="Subramanian S."/>
            <person name="Sycamore N."/>
            <person name="Tracey A."/>
            <person name="Tromans A."/>
            <person name="Van Helmond Z."/>
            <person name="Wall M."/>
            <person name="Wallis J.M."/>
            <person name="White S."/>
            <person name="Whitehead S.L."/>
            <person name="Wilkinson J.E."/>
            <person name="Willey D.L."/>
            <person name="Williams H."/>
            <person name="Wilming L."/>
            <person name="Wray P.W."/>
            <person name="Wu Z."/>
            <person name="Coulson A."/>
            <person name="Vaudin M."/>
            <person name="Sulston J.E."/>
            <person name="Durbin R.M."/>
            <person name="Hubbard T."/>
            <person name="Wooster R."/>
            <person name="Dunham I."/>
            <person name="Carter N.P."/>
            <person name="McVean G."/>
            <person name="Ross M.T."/>
            <person name="Harrow J."/>
            <person name="Olson M.V."/>
            <person name="Beck S."/>
            <person name="Rogers J."/>
            <person name="Bentley D.R."/>
        </authorList>
    </citation>
    <scope>NUCLEOTIDE SEQUENCE [LARGE SCALE GENOMIC DNA]</scope>
</reference>
<reference key="9">
    <citation type="submission" date="2005-09" db="EMBL/GenBank/DDBJ databases">
        <authorList>
            <person name="Mural R.J."/>
            <person name="Istrail S."/>
            <person name="Sutton G.G."/>
            <person name="Florea L."/>
            <person name="Halpern A.L."/>
            <person name="Mobarry C.M."/>
            <person name="Lippert R."/>
            <person name="Walenz B."/>
            <person name="Shatkay H."/>
            <person name="Dew I."/>
            <person name="Miller J.R."/>
            <person name="Flanigan M.J."/>
            <person name="Edwards N.J."/>
            <person name="Bolanos R."/>
            <person name="Fasulo D."/>
            <person name="Halldorsson B.V."/>
            <person name="Hannenhalli S."/>
            <person name="Turner R."/>
            <person name="Yooseph S."/>
            <person name="Lu F."/>
            <person name="Nusskern D.R."/>
            <person name="Shue B.C."/>
            <person name="Zheng X.H."/>
            <person name="Zhong F."/>
            <person name="Delcher A.L."/>
            <person name="Huson D.H."/>
            <person name="Kravitz S.A."/>
            <person name="Mouchard L."/>
            <person name="Reinert K."/>
            <person name="Remington K.A."/>
            <person name="Clark A.G."/>
            <person name="Waterman M.S."/>
            <person name="Eichler E.E."/>
            <person name="Adams M.D."/>
            <person name="Hunkapiller M.W."/>
            <person name="Myers E.W."/>
            <person name="Venter J.C."/>
        </authorList>
    </citation>
    <scope>NUCLEOTIDE SEQUENCE [LARGE SCALE GENOMIC DNA]</scope>
</reference>
<reference key="10">
    <citation type="journal article" date="2004" name="Genome Res.">
        <title>The status, quality, and expansion of the NIH full-length cDNA project: the Mammalian Gene Collection (MGC).</title>
        <authorList>
            <consortium name="The MGC Project Team"/>
        </authorList>
    </citation>
    <scope>NUCLEOTIDE SEQUENCE [LARGE SCALE MRNA] (ISOFORMS 1 AND 2)</scope>
    <source>
        <tissue>Liver</tissue>
    </source>
</reference>
<reference key="11">
    <citation type="journal article" date="1983" name="J. Immunol.">
        <title>Biosynthesis and postsynthetic processing of human C-reactive protein.</title>
        <authorList>
            <person name="Tucci A."/>
            <person name="Goldberger G."/>
            <person name="Whitehead A.S."/>
            <person name="Kay R.M."/>
            <person name="Woods D.E."/>
            <person name="Colten H.R."/>
        </authorList>
    </citation>
    <scope>NUCLEOTIDE SEQUENCE [MRNA] OF 1-26</scope>
</reference>
<reference key="12">
    <citation type="journal article" date="1983" name="Science">
        <title>Isolation of human C-reactive protein complementary DNA and localization of the gene to chromosome 1.</title>
        <authorList>
            <person name="Whitehead A.S."/>
            <person name="Bruns G.A.P."/>
            <person name="Markham A.F."/>
            <person name="Colten H.R."/>
            <person name="Woods D.E."/>
        </authorList>
    </citation>
    <scope>NUCLEOTIDE SEQUENCE [MRNA] OF 144-175</scope>
</reference>
<reference key="13">
    <citation type="journal article" date="1979" name="J. Biol. Chem.">
        <title>Primary structure of human C-reactive protein.</title>
        <authorList>
            <person name="Oliveira E.B."/>
            <person name="Gotschlich E.C."/>
            <person name="Liu T.-Y."/>
        </authorList>
    </citation>
    <scope>PROTEIN SEQUENCE OF 19-224</scope>
    <scope>PYROGLUTAMATE FORMATION AT GLN-19</scope>
</reference>
<reference key="14">
    <citation type="journal article" date="1977" name="Proc. Natl. Acad. Sci. U.S.A.">
        <title>Partial amino-acid sequences of human and rabbit C-reactive proteins: homology with immunoglobulins and histocompatibility antigens.</title>
        <authorList>
            <person name="Osmand A.P."/>
            <person name="Gewurz H."/>
            <person name="Friedenson B."/>
        </authorList>
    </citation>
    <scope>PROTEIN SEQUENCE OF 22-55</scope>
</reference>
<reference key="15">
    <citation type="journal article" date="2004" name="Clin. Proteomics">
        <title>Selected expression profiling of full-length proteins and their variants in human plasma.</title>
        <authorList>
            <person name="Kiernan U.A."/>
            <person name="Nedelkov D."/>
            <person name="Tubbs K.A."/>
            <person name="Niederkofler E.E."/>
            <person name="Nelson R.W."/>
        </authorList>
    </citation>
    <scope>MASS SPECTROMETRY</scope>
</reference>
<reference key="16">
    <citation type="journal article" date="2010" name="J. Immunol.">
        <title>Secreted M-ficolin anchors onto monocyte transmembrane G protein-coupled receptor 43 and cross talks with plasma C-reactive protein to mediate immune signaling and regulate host defense.</title>
        <authorList>
            <person name="Zhang J."/>
            <person name="Yang L."/>
            <person name="Ang Z."/>
            <person name="Yoong S.L."/>
            <person name="Tran T.T."/>
            <person name="Anand G.S."/>
            <person name="Tan N.S."/>
            <person name="Ho B."/>
            <person name="Ding J.L."/>
        </authorList>
    </citation>
    <scope>INTERACTION WITH FCN1</scope>
</reference>
<reference key="17">
    <citation type="journal article" date="1994" name="Structure">
        <title>Comparative analyses of pentraxins: implications for protomer assembly and ligand binding.</title>
        <authorList>
            <person name="Srinivasan N."/>
            <person name="White H.E."/>
            <person name="Emsley J."/>
            <person name="Wood S.P."/>
            <person name="Pepys M.B."/>
            <person name="Blundell T.L."/>
        </authorList>
    </citation>
    <scope>3D-STRUCTURE MODELING</scope>
</reference>
<reference key="18">
    <citation type="journal article" date="1996" name="Nat. Struct. Biol.">
        <title>Three dimensional structure of human C-reactive protein.</title>
        <authorList>
            <person name="Shrive A.K."/>
            <person name="Cheetham G.M.T."/>
            <person name="Holden D."/>
            <person name="Myles D.A.A."/>
            <person name="Turnell W.G."/>
            <person name="Volanakis J.E."/>
            <person name="Pepys M.B."/>
            <person name="Bloomer A.C."/>
            <person name="Greenhough T.J."/>
        </authorList>
    </citation>
    <scope>X-RAY CRYSTALLOGRAPHY (3.0 ANGSTROMS)</scope>
</reference>
<reference key="19">
    <citation type="journal article" date="1999" name="Structure">
        <title>The physiological structure of human C-reactive protein and its complex with phosphocholine.</title>
        <authorList>
            <person name="Thompson D."/>
            <person name="Pepys M.B."/>
            <person name="Wood S.P."/>
        </authorList>
    </citation>
    <scope>X-RAY CRYSTALLOGRAPHY (2.5 ANGSTROMS)</scope>
</reference>
<gene>
    <name type="primary">CRP</name>
    <name type="synonym">PTX1</name>
</gene>
<comment type="function">
    <text>Displays several functions associated with host defense: it promotes agglutination, bacterial capsular swelling, phagocytosis and complement fixation through its calcium-dependent binding to phosphorylcholine. Can interact with DNA and histones and may scavenge nuclear material released from damaged circulating cells.</text>
</comment>
<comment type="cofactor">
    <cofactor>
        <name>Ca(2+)</name>
        <dbReference type="ChEBI" id="CHEBI:29108"/>
    </cofactor>
    <text>Binds 2 calcium ions per subunit.</text>
</comment>
<comment type="subunit">
    <text evidence="2">Homopentamer. Pentraxin (or pentaxin) have a discoid arrangement of 5 non-covalently bound subunits. Interacts with FCN1; may regulate monocyte activation by FCN1.</text>
</comment>
<comment type="interaction">
    <interactant intactId="EBI-1395983">
        <id>P02741</id>
    </interactant>
    <interactant intactId="EBI-1223708">
        <id>P08603</id>
        <label>CFH</label>
    </interactant>
    <organismsDiffer>false</organismsDiffer>
    <experiments>39</experiments>
</comment>
<comment type="interaction">
    <interactant intactId="EBI-1395983">
        <id>P02741</id>
    </interactant>
    <interactant intactId="EBI-22027829">
        <id>P08603-1</id>
        <label>CFH</label>
    </interactant>
    <organismsDiffer>false</organismsDiffer>
    <experiments>3</experiments>
</comment>
<comment type="interaction">
    <interactant intactId="EBI-1395983">
        <id>P02741</id>
    </interactant>
    <interactant intactId="EBI-12684810">
        <id>P08603-2</id>
        <label>CFH</label>
    </interactant>
    <organismsDiffer>false</organismsDiffer>
    <experiments>8</experiments>
</comment>
<comment type="interaction">
    <interactant intactId="EBI-1395983">
        <id>P02741</id>
    </interactant>
    <interactant intactId="EBI-22114230">
        <id>PRO_0000005894</id>
        <label>CFH</label>
        <dbReference type="UniProtKB" id="P08603"/>
    </interactant>
    <organismsDiffer>false</organismsDiffer>
    <experiments>5</experiments>
</comment>
<comment type="interaction">
    <interactant intactId="EBI-1395983">
        <id>P02741</id>
    </interactant>
    <interactant intactId="EBI-3935840">
        <id>Q03591</id>
        <label>CFHR1</label>
    </interactant>
    <organismsDiffer>false</organismsDiffer>
    <experiments>10</experiments>
</comment>
<comment type="interaction">
    <interactant intactId="EBI-1395983">
        <id>P02741</id>
    </interactant>
    <interactant intactId="EBI-3941903">
        <id>Q02985</id>
        <label>CFHR3</label>
    </interactant>
    <organismsDiffer>false</organismsDiffer>
    <experiments>2</experiments>
</comment>
<comment type="interaction">
    <interactant intactId="EBI-1395983">
        <id>P02741</id>
    </interactant>
    <interactant intactId="EBI-22033617">
        <id>Q92496-1</id>
        <label>CFHR4</label>
    </interactant>
    <organismsDiffer>false</organismsDiffer>
    <experiments>23</experiments>
</comment>
<comment type="interaction">
    <interactant intactId="EBI-1395983">
        <id>P02741</id>
    </interactant>
    <interactant intactId="EBI-22033638">
        <id>Q92496-3</id>
        <label>CFHR4</label>
    </interactant>
    <organismsDiffer>false</organismsDiffer>
    <experiments>5</experiments>
</comment>
<comment type="interaction">
    <interactant intactId="EBI-1395983">
        <id>P02741</id>
    </interactant>
    <interactant intactId="EBI-22114654">
        <id>PRO_0000005900</id>
        <label>CFHR5</label>
        <dbReference type="UniProtKB" id="Q9BXR6"/>
    </interactant>
    <organismsDiffer>false</organismsDiffer>
    <experiments>5</experiments>
</comment>
<comment type="interaction">
    <interactant intactId="EBI-1395983">
        <id>P02741</id>
    </interactant>
    <interactant intactId="EBI-1104680">
        <id>Q5KU26</id>
        <label>COLEC12</label>
    </interactant>
    <organismsDiffer>false</organismsDiffer>
    <experiments>3</experiments>
</comment>
<comment type="interaction">
    <interactant intactId="EBI-1395983">
        <id>P02741</id>
    </interactant>
    <interactant intactId="EBI-1395983">
        <id>P02741</id>
        <label>CRP</label>
    </interactant>
    <organismsDiffer>false</organismsDiffer>
    <experiments>9</experiments>
</comment>
<comment type="interaction">
    <interactant intactId="EBI-1395983">
        <id>P02741</id>
    </interactant>
    <interactant intactId="EBI-1396036">
        <id>P31995</id>
        <label>FCGR2C</label>
    </interactant>
    <organismsDiffer>false</organismsDiffer>
    <experiments>2</experiments>
</comment>
<comment type="interaction">
    <interactant intactId="EBI-1395983">
        <id>P02741</id>
    </interactant>
    <interactant intactId="EBI-5282479">
        <id>O00602</id>
        <label>FCN1</label>
    </interactant>
    <organismsDiffer>false</organismsDiffer>
    <experiments>4</experiments>
</comment>
<comment type="interaction">
    <interactant intactId="EBI-1395983">
        <id>P02741</id>
    </interactant>
    <interactant intactId="EBI-750953">
        <id>Q96IJ6</id>
        <label>GMPPA</label>
    </interactant>
    <organismsDiffer>false</organismsDiffer>
    <experiments>3</experiments>
</comment>
<comment type="interaction">
    <interactant intactId="EBI-22033103">
        <id>PRO_0000023526</id>
    </interactant>
    <interactant intactId="EBI-978348">
        <id>P04003</id>
        <label>C4BPA</label>
    </interactant>
    <organismsDiffer>false</organismsDiffer>
    <experiments>4</experiments>
</comment>
<comment type="interaction">
    <interactant intactId="EBI-22033103">
        <id>PRO_0000023526</id>
    </interactant>
    <interactant intactId="EBI-1223708">
        <id>P08603</id>
        <label>CFH</label>
    </interactant>
    <organismsDiffer>false</organismsDiffer>
    <experiments>3</experiments>
</comment>
<comment type="interaction">
    <interactant intactId="EBI-22033103">
        <id>PRO_0000023526</id>
    </interactant>
    <interactant intactId="EBI-9038570">
        <id>P27918</id>
        <label>CFP</label>
    </interactant>
    <organismsDiffer>false</organismsDiffer>
    <experiments>2</experiments>
</comment>
<comment type="subcellular location">
    <subcellularLocation>
        <location>Secreted</location>
    </subcellularLocation>
</comment>
<comment type="alternative products">
    <event type="alternative splicing"/>
    <isoform>
        <id>P02741-1</id>
        <name>1</name>
        <sequence type="displayed"/>
    </isoform>
    <isoform>
        <id>P02741-2</id>
        <name>2</name>
        <sequence type="described" ref="VSP_004656"/>
    </isoform>
</comment>
<comment type="tissue specificity">
    <text>Found in plasma.</text>
</comment>
<comment type="induction">
    <text>The concentration of CRP in plasma increases greatly during acute phase response to tissue injury, infection or other inflammatory stimuli. It is induced by IL1/interleukin-1 and IL6/interleukin-6.</text>
</comment>
<comment type="mass spectrometry" mass="23028.0" method="MALDI" evidence="4">
    <molecule>C-reactive protein</molecule>
</comment>
<comment type="mass spectrometry" mass="22930.0" method="MALDI" evidence="4">
    <molecule>C-reactive protein(1-205)</molecule>
</comment>
<comment type="miscellaneous">
    <text>This protein owes its name to its ability precipitate pneumococcal C-polysaccharide in the presence of calcium.</text>
</comment>
<comment type="similarity">
    <text evidence="6">Belongs to the pentraxin family.</text>
</comment>
<comment type="online information" name="Wikipedia">
    <link uri="https://en.wikipedia.org/wiki/C-reactive_protein"/>
    <text>C-reactive protein entry</text>
</comment>
<comment type="online information" name="Protein Spotlight">
    <link uri="https://www.proteinspotlight.org/back_issues/030"/>
    <text>No more Christmas pudding? - Issue 30 of January 2003</text>
</comment>
<feature type="signal peptide" evidence="3">
    <location>
        <begin position="1"/>
        <end position="18"/>
    </location>
</feature>
<feature type="chain" id="PRO_0000023526" description="C-reactive protein">
    <location>
        <begin position="19"/>
        <end position="224"/>
    </location>
</feature>
<feature type="chain" id="PRO_0000023527" description="C-reactive protein(1-205)">
    <location>
        <begin position="19"/>
        <end position="223"/>
    </location>
</feature>
<feature type="domain" description="Pentraxin (PTX)" evidence="1">
    <location>
        <begin position="23"/>
        <end position="224"/>
    </location>
</feature>
<feature type="binding site" evidence="1">
    <location>
        <position position="78"/>
    </location>
    <ligand>
        <name>Ca(2+)</name>
        <dbReference type="ChEBI" id="CHEBI:29108"/>
        <label>1</label>
    </ligand>
</feature>
<feature type="binding site" evidence="1">
    <location>
        <position position="79"/>
    </location>
    <ligand>
        <name>Ca(2+)</name>
        <dbReference type="ChEBI" id="CHEBI:29108"/>
        <label>1</label>
    </ligand>
</feature>
<feature type="binding site" evidence="1">
    <location>
        <position position="156"/>
    </location>
    <ligand>
        <name>Ca(2+)</name>
        <dbReference type="ChEBI" id="CHEBI:29108"/>
        <label>1</label>
    </ligand>
</feature>
<feature type="binding site" evidence="1">
    <location>
        <position position="156"/>
    </location>
    <ligand>
        <name>Ca(2+)</name>
        <dbReference type="ChEBI" id="CHEBI:29108"/>
        <label>2</label>
    </ligand>
</feature>
<feature type="binding site" evidence="1">
    <location>
        <position position="157"/>
    </location>
    <ligand>
        <name>Ca(2+)</name>
        <dbReference type="ChEBI" id="CHEBI:29108"/>
        <label>1</label>
    </ligand>
</feature>
<feature type="binding site" evidence="1">
    <location>
        <position position="158"/>
    </location>
    <ligand>
        <name>Ca(2+)</name>
        <dbReference type="ChEBI" id="CHEBI:29108"/>
        <label>1</label>
    </ligand>
</feature>
<feature type="binding site" evidence="1">
    <location>
        <position position="158"/>
    </location>
    <ligand>
        <name>Ca(2+)</name>
        <dbReference type="ChEBI" id="CHEBI:29108"/>
        <label>2</label>
    </ligand>
</feature>
<feature type="binding site" evidence="1">
    <location>
        <position position="168"/>
    </location>
    <ligand>
        <name>Ca(2+)</name>
        <dbReference type="ChEBI" id="CHEBI:29108"/>
        <label>2</label>
    </ligand>
</feature>
<feature type="modified residue" description="Pyrrolidone carboxylic acid" evidence="3">
    <location>
        <position position="19"/>
    </location>
</feature>
<feature type="disulfide bond" evidence="1 3">
    <location>
        <begin position="54"/>
        <end position="115"/>
    </location>
</feature>
<feature type="splice variant" id="VSP_004656" description="In isoform 2." evidence="5">
    <location>
        <begin position="67"/>
        <end position="199"/>
    </location>
</feature>
<feature type="sequence conflict" description="In Ref. 14; AA sequence." evidence="6" ref="14">
    <original>K</original>
    <variation>G</variation>
    <location>
        <position position="49"/>
    </location>
</feature>
<feature type="sequence conflict" description="In Ref. 14; AA sequence." evidence="6" ref="14">
    <original>T</original>
    <variation>G</variation>
    <location>
        <position position="52"/>
    </location>
</feature>
<feature type="sequence conflict" description="In Ref. 4; CAA39671." evidence="6" ref="4">
    <original>YSIFSYATKRQDNEIL</original>
    <variation>TVFSRMPPRDKTMRFF</variation>
    <location>
        <begin position="67"/>
        <end position="82"/>
    </location>
</feature>
<feature type="sequence conflict" description="In Ref. 13; AA sequence." evidence="6" ref="13">
    <location>
        <begin position="80"/>
        <end position="98"/>
    </location>
</feature>
<feature type="sequence conflict" description="In Ref. 12; AAA52074." evidence="6" ref="12">
    <original>L</original>
    <variation>V</variation>
    <location>
        <position position="170"/>
    </location>
</feature>
<feature type="strand" evidence="9">
    <location>
        <begin position="25"/>
        <end position="29"/>
    </location>
</feature>
<feature type="strand" evidence="9">
    <location>
        <begin position="37"/>
        <end position="40"/>
    </location>
</feature>
<feature type="strand" evidence="9">
    <location>
        <begin position="48"/>
        <end position="60"/>
    </location>
</feature>
<feature type="helix" evidence="9">
    <location>
        <begin position="61"/>
        <end position="63"/>
    </location>
</feature>
<feature type="strand" evidence="9">
    <location>
        <begin position="67"/>
        <end position="74"/>
    </location>
</feature>
<feature type="strand" evidence="9">
    <location>
        <begin position="77"/>
        <end position="86"/>
    </location>
</feature>
<feature type="turn" evidence="9">
    <location>
        <begin position="87"/>
        <end position="89"/>
    </location>
</feature>
<feature type="strand" evidence="9">
    <location>
        <begin position="90"/>
        <end position="95"/>
    </location>
</feature>
<feature type="strand" evidence="9">
    <location>
        <begin position="98"/>
        <end position="103"/>
    </location>
</feature>
<feature type="strand" evidence="9">
    <location>
        <begin position="112"/>
        <end position="119"/>
    </location>
</feature>
<feature type="turn" evidence="9">
    <location>
        <begin position="120"/>
        <end position="122"/>
    </location>
</feature>
<feature type="strand" evidence="9">
    <location>
        <begin position="124"/>
        <end position="129"/>
    </location>
</feature>
<feature type="strand" evidence="8">
    <location>
        <begin position="132"/>
        <end position="138"/>
    </location>
</feature>
<feature type="strand" evidence="9">
    <location>
        <begin position="150"/>
        <end position="155"/>
    </location>
</feature>
<feature type="strand" evidence="11">
    <location>
        <begin position="158"/>
        <end position="161"/>
    </location>
</feature>
<feature type="strand" evidence="10">
    <location>
        <begin position="162"/>
        <end position="164"/>
    </location>
</feature>
<feature type="helix" evidence="9">
    <location>
        <begin position="166"/>
        <end position="168"/>
    </location>
</feature>
<feature type="strand" evidence="9">
    <location>
        <begin position="172"/>
        <end position="182"/>
    </location>
</feature>
<feature type="helix" evidence="9">
    <location>
        <begin position="186"/>
        <end position="194"/>
    </location>
</feature>
<feature type="strand" evidence="9">
    <location>
        <begin position="201"/>
        <end position="203"/>
    </location>
</feature>
<feature type="helix" evidence="7">
    <location>
        <begin position="205"/>
        <end position="207"/>
    </location>
</feature>
<feature type="strand" evidence="9">
    <location>
        <begin position="210"/>
        <end position="215"/>
    </location>
</feature>
<feature type="strand" evidence="9">
    <location>
        <begin position="217"/>
        <end position="220"/>
    </location>
</feature>
<name>CRP_HUMAN</name>
<organism>
    <name type="scientific">Homo sapiens</name>
    <name type="common">Human</name>
    <dbReference type="NCBI Taxonomy" id="9606"/>
    <lineage>
        <taxon>Eukaryota</taxon>
        <taxon>Metazoa</taxon>
        <taxon>Chordata</taxon>
        <taxon>Craniata</taxon>
        <taxon>Vertebrata</taxon>
        <taxon>Euteleostomi</taxon>
        <taxon>Mammalia</taxon>
        <taxon>Eutheria</taxon>
        <taxon>Euarchontoglires</taxon>
        <taxon>Primates</taxon>
        <taxon>Haplorrhini</taxon>
        <taxon>Catarrhini</taxon>
        <taxon>Hominidae</taxon>
        <taxon>Homo</taxon>
    </lineage>
</organism>